<evidence type="ECO:0000255" key="1">
    <source>
        <dbReference type="HAMAP-Rule" id="MF_00075"/>
    </source>
</evidence>
<evidence type="ECO:0000269" key="2">
    <source>
    </source>
</evidence>
<dbReference type="EMBL" id="AB001684">
    <property type="protein sequence ID" value="BAA58000.1"/>
    <property type="molecule type" value="Genomic_DNA"/>
</dbReference>
<dbReference type="PIR" id="T07352">
    <property type="entry name" value="T07352"/>
</dbReference>
<dbReference type="RefSeq" id="NP_045924.1">
    <property type="nucleotide sequence ID" value="NC_001865.1"/>
</dbReference>
<dbReference type="SMR" id="P56290"/>
<dbReference type="GeneID" id="809142"/>
<dbReference type="GO" id="GO:0009507">
    <property type="term" value="C:chloroplast"/>
    <property type="evidence" value="ECO:0007669"/>
    <property type="project" value="UniProtKB-SubCell"/>
</dbReference>
<dbReference type="GO" id="GO:0005829">
    <property type="term" value="C:cytosol"/>
    <property type="evidence" value="ECO:0007669"/>
    <property type="project" value="TreeGrafter"/>
</dbReference>
<dbReference type="GO" id="GO:0043022">
    <property type="term" value="F:ribosome binding"/>
    <property type="evidence" value="ECO:0007669"/>
    <property type="project" value="UniProtKB-UniRule"/>
</dbReference>
<dbReference type="GO" id="GO:0019843">
    <property type="term" value="F:rRNA binding"/>
    <property type="evidence" value="ECO:0007669"/>
    <property type="project" value="UniProtKB-UniRule"/>
</dbReference>
<dbReference type="GO" id="GO:0003743">
    <property type="term" value="F:translation initiation factor activity"/>
    <property type="evidence" value="ECO:0007669"/>
    <property type="project" value="UniProtKB-UniRule"/>
</dbReference>
<dbReference type="CDD" id="cd04451">
    <property type="entry name" value="S1_IF1"/>
    <property type="match status" value="1"/>
</dbReference>
<dbReference type="FunFam" id="2.40.50.140:FF:000002">
    <property type="entry name" value="Translation initiation factor IF-1"/>
    <property type="match status" value="1"/>
</dbReference>
<dbReference type="Gene3D" id="2.40.50.140">
    <property type="entry name" value="Nucleic acid-binding proteins"/>
    <property type="match status" value="1"/>
</dbReference>
<dbReference type="HAMAP" id="MF_00075">
    <property type="entry name" value="IF_1"/>
    <property type="match status" value="1"/>
</dbReference>
<dbReference type="InterPro" id="IPR012340">
    <property type="entry name" value="NA-bd_OB-fold"/>
</dbReference>
<dbReference type="InterPro" id="IPR006196">
    <property type="entry name" value="RNA-binding_domain_S1_IF1"/>
</dbReference>
<dbReference type="InterPro" id="IPR003029">
    <property type="entry name" value="S1_domain"/>
</dbReference>
<dbReference type="InterPro" id="IPR004368">
    <property type="entry name" value="TIF_IF1"/>
</dbReference>
<dbReference type="NCBIfam" id="TIGR00008">
    <property type="entry name" value="infA"/>
    <property type="match status" value="1"/>
</dbReference>
<dbReference type="PANTHER" id="PTHR33370">
    <property type="entry name" value="TRANSLATION INITIATION FACTOR IF-1, CHLOROPLASTIC"/>
    <property type="match status" value="1"/>
</dbReference>
<dbReference type="PANTHER" id="PTHR33370:SF1">
    <property type="entry name" value="TRANSLATION INITIATION FACTOR IF-1, CHLOROPLASTIC"/>
    <property type="match status" value="1"/>
</dbReference>
<dbReference type="Pfam" id="PF01176">
    <property type="entry name" value="eIF-1a"/>
    <property type="match status" value="1"/>
</dbReference>
<dbReference type="SMART" id="SM00316">
    <property type="entry name" value="S1"/>
    <property type="match status" value="1"/>
</dbReference>
<dbReference type="SUPFAM" id="SSF50249">
    <property type="entry name" value="Nucleic acid-binding proteins"/>
    <property type="match status" value="1"/>
</dbReference>
<dbReference type="PROSITE" id="PS50832">
    <property type="entry name" value="S1_IF1_TYPE"/>
    <property type="match status" value="1"/>
</dbReference>
<sequence length="79" mass="8995">MTRKNIDLIEMEGVVTQCLSNGMFRVKLENGFLVLAHVSGKIRRNSIRILLGDRVAVELSPYDLHRGRITFRLRPGSKT</sequence>
<feature type="chain" id="PRO_0000095926" description="Translation initiation factor IF-1, chloroplastic">
    <location>
        <begin position="1"/>
        <end position="79"/>
    </location>
</feature>
<feature type="domain" description="S1-like" evidence="1">
    <location>
        <begin position="1"/>
        <end position="74"/>
    </location>
</feature>
<protein>
    <recommendedName>
        <fullName evidence="1">Translation initiation factor IF-1, chloroplastic</fullName>
    </recommendedName>
</protein>
<geneLocation type="chloroplast"/>
<gene>
    <name evidence="1" type="primary">infA</name>
</gene>
<keyword id="KW-0150">Chloroplast</keyword>
<keyword id="KW-0396">Initiation factor</keyword>
<keyword id="KW-0934">Plastid</keyword>
<keyword id="KW-0648">Protein biosynthesis</keyword>
<keyword id="KW-0694">RNA-binding</keyword>
<keyword id="KW-0699">rRNA-binding</keyword>
<proteinExistence type="evidence at transcript level"/>
<name>IF1C_CHLVU</name>
<accession>P56290</accession>
<reference key="1">
    <citation type="journal article" date="1997" name="Proc. Natl. Acad. Sci. U.S.A.">
        <title>Complete nucleotide sequence of the chloroplast genome from the green alga Chlorella vulgaris: the existence of genes possibly involved in chloroplast division.</title>
        <authorList>
            <person name="Wakasugi T."/>
            <person name="Nagai T."/>
            <person name="Kapoor M."/>
            <person name="Sugita M."/>
            <person name="Ito M."/>
            <person name="Ito S."/>
            <person name="Tsudzuki J."/>
            <person name="Nakashima K."/>
            <person name="Tsudzuki T."/>
            <person name="Suzuki Y."/>
            <person name="Hamada A."/>
            <person name="Ohta T."/>
            <person name="Inamura A."/>
            <person name="Yoshinaga K."/>
            <person name="Sugiura M."/>
        </authorList>
    </citation>
    <scope>NUCLEOTIDE SEQUENCE [LARGE SCALE GENOMIC DNA]</scope>
    <source>
        <strain>IAM C-27 / Tamiya</strain>
    </source>
</reference>
<reference key="2">
    <citation type="journal article" date="1999" name="FEBS Lett.">
        <title>The chloroplast infA gene with a functional UUG initiation codon.</title>
        <authorList>
            <person name="Hirose T."/>
            <person name="Ideue T."/>
            <person name="Wakasugi T."/>
            <person name="Sugiura M."/>
        </authorList>
    </citation>
    <scope>INDUCTION</scope>
    <scope>IDENTIFICATION OF START CODON</scope>
</reference>
<organism>
    <name type="scientific">Chlorella vulgaris</name>
    <name type="common">Green alga</name>
    <dbReference type="NCBI Taxonomy" id="3077"/>
    <lineage>
        <taxon>Eukaryota</taxon>
        <taxon>Viridiplantae</taxon>
        <taxon>Chlorophyta</taxon>
        <taxon>core chlorophytes</taxon>
        <taxon>Trebouxiophyceae</taxon>
        <taxon>Chlorellales</taxon>
        <taxon>Chlorellaceae</taxon>
        <taxon>Chlorella clade</taxon>
        <taxon>Chlorella</taxon>
    </lineage>
</organism>
<comment type="function">
    <text evidence="1">One of the essential components for the initiation of protein synthesis. Stabilizes the binding of IF-2 and IF-3 on the 30S subunit to which N-formylmethionyl-tRNA(fMet) subsequently binds. Helps modulate mRNA selection, yielding the 30S pre-initiation complex (PIC). Upon addition of the 50S ribosomal subunit IF-1, IF-2 and IF-3 are released leaving the mature 70S translation initiation complex.</text>
</comment>
<comment type="subunit">
    <text evidence="1">Component of the 30S ribosomal translation pre-initiation complex which assembles on the 30S ribosome in the order IF-2 and IF-3, IF-1 and N-formylmethionyl-tRNA(fMet); mRNA recruitment can occur at any time during PIC assembly.</text>
</comment>
<comment type="subcellular location">
    <subcellularLocation>
        <location evidence="1">Plastid</location>
        <location evidence="1">Chloroplast</location>
    </subcellularLocation>
</comment>
<comment type="induction">
    <text evidence="2">Constitutively expressed.</text>
</comment>
<comment type="similarity">
    <text evidence="1">Belongs to the IF-1 family.</text>
</comment>